<keyword id="KW-0131">Cell cycle</keyword>
<keyword id="KW-0132">Cell division</keyword>
<keyword id="KW-0997">Cell inner membrane</keyword>
<keyword id="KW-1003">Cell membrane</keyword>
<keyword id="KW-0133">Cell shape</keyword>
<keyword id="KW-0961">Cell wall biogenesis/degradation</keyword>
<keyword id="KW-0328">Glycosyltransferase</keyword>
<keyword id="KW-0472">Membrane</keyword>
<keyword id="KW-0573">Peptidoglycan synthesis</keyword>
<keyword id="KW-0808">Transferase</keyword>
<keyword id="KW-0812">Transmembrane</keyword>
<keyword id="KW-1133">Transmembrane helix</keyword>
<organism>
    <name type="scientific">Thioalkalivibrio sp. (strain K90mix)</name>
    <dbReference type="NCBI Taxonomy" id="396595"/>
    <lineage>
        <taxon>Bacteria</taxon>
        <taxon>Pseudomonadati</taxon>
        <taxon>Pseudomonadota</taxon>
        <taxon>Gammaproteobacteria</taxon>
        <taxon>Chromatiales</taxon>
        <taxon>Ectothiorhodospiraceae</taxon>
        <taxon>Thioalkalivibrio</taxon>
    </lineage>
</organism>
<reference key="1">
    <citation type="submission" date="2010-02" db="EMBL/GenBank/DDBJ databases">
        <title>Complete sequence of chromosome of Thioalkalivibrio sp. K90mix.</title>
        <authorList>
            <consortium name="US DOE Joint Genome Institute"/>
            <person name="Lucas S."/>
            <person name="Copeland A."/>
            <person name="Lapidus A."/>
            <person name="Cheng J.-F."/>
            <person name="Bruce D."/>
            <person name="Goodwin L."/>
            <person name="Pitluck S."/>
            <person name="Foster B."/>
            <person name="Sun H."/>
            <person name="Larimer F."/>
            <person name="Land M."/>
            <person name="Hauser L."/>
            <person name="Kyrpides N."/>
            <person name="Ivanova N."/>
            <person name="Sorokin D.Y."/>
            <person name="Muyzer G."/>
            <person name="Woyke T."/>
        </authorList>
    </citation>
    <scope>NUCLEOTIDE SEQUENCE [LARGE SCALE GENOMIC DNA]</scope>
    <source>
        <strain>K90mix</strain>
    </source>
</reference>
<evidence type="ECO:0000255" key="1"/>
<evidence type="ECO:0000255" key="2">
    <source>
        <dbReference type="HAMAP-Rule" id="MF_00913"/>
    </source>
</evidence>
<sequence length="400" mass="43131">MSTGSLPLGLPSRDSLDGLRNSVDLPLLAAAALLLGLGLIMVASASMDLGERYYGNTWHFFQRQVLFAAIGLALATVMWAIPLERWERAGPWLLILVMVLLIAVLLPGVGRTVNGATRWIPIGMFNLQVAEPVKLLVVMYLAGYIVRHYSALRLHLRGFVRPLVVLGFGTVLLLLQPDFGGAAIMLAIGMGMLFLAGAKLWQFAALGATIAVGMAFVAVAAPYRVARLTAFLDPWQDPFATGFQLTQSLIAIGSGGWFGTGLGNSVQKLFYLPEAHNDFLFAVFAEEFGFIGVLALIALFAVVVWRCVKIGLWAERAGHAFGSHLAFGVAIWLALQSALNLAVNMGLLPTKGMTLPFLSYGGSSLIVTLMAIGLVMRVYREAQIPAPRQSTPPRRKRGQA</sequence>
<proteinExistence type="inferred from homology"/>
<accession>D3SD93</accession>
<feature type="chain" id="PRO_0000415216" description="Probable peptidoglycan glycosyltransferase FtsW">
    <location>
        <begin position="1"/>
        <end position="400"/>
    </location>
</feature>
<feature type="topological domain" description="Cytoplasmic" evidence="1">
    <location>
        <begin position="1"/>
        <end position="24"/>
    </location>
</feature>
<feature type="transmembrane region" description="Helical" evidence="2">
    <location>
        <begin position="25"/>
        <end position="45"/>
    </location>
</feature>
<feature type="topological domain" description="Periplasmic" evidence="1">
    <location>
        <begin position="46"/>
        <end position="63"/>
    </location>
</feature>
<feature type="transmembrane region" description="Helical" evidence="2">
    <location>
        <begin position="64"/>
        <end position="84"/>
    </location>
</feature>
<feature type="topological domain" description="Cytoplasmic" evidence="1">
    <location>
        <begin position="85"/>
        <end position="88"/>
    </location>
</feature>
<feature type="transmembrane region" description="Helical" evidence="2">
    <location>
        <begin position="89"/>
        <end position="109"/>
    </location>
</feature>
<feature type="topological domain" description="Periplasmic" evidence="1">
    <location>
        <begin position="110"/>
        <end position="118"/>
    </location>
</feature>
<feature type="transmembrane region" description="Helical" evidence="2">
    <location>
        <begin position="119"/>
        <end position="139"/>
    </location>
</feature>
<feature type="topological domain" description="Cytoplasmic" evidence="1">
    <location>
        <begin position="140"/>
        <end position="153"/>
    </location>
</feature>
<feature type="transmembrane region" description="Helical" evidence="2">
    <location>
        <begin position="154"/>
        <end position="174"/>
    </location>
</feature>
<feature type="topological domain" description="Periplasmic" evidence="1">
    <location>
        <begin position="175"/>
        <end position="177"/>
    </location>
</feature>
<feature type="transmembrane region" description="Helical" evidence="2">
    <location>
        <begin position="178"/>
        <end position="198"/>
    </location>
</feature>
<feature type="topological domain" description="Cytoplasmic" evidence="1">
    <location>
        <position position="199"/>
    </location>
</feature>
<feature type="transmembrane region" description="Helical" evidence="2">
    <location>
        <begin position="200"/>
        <end position="220"/>
    </location>
</feature>
<feature type="topological domain" description="Periplasmic" evidence="1">
    <location>
        <begin position="221"/>
        <end position="278"/>
    </location>
</feature>
<feature type="transmembrane region" description="Helical" evidence="2">
    <location>
        <begin position="279"/>
        <end position="299"/>
    </location>
</feature>
<feature type="topological domain" description="Cytoplasmic" evidence="1">
    <location>
        <begin position="300"/>
        <end position="324"/>
    </location>
</feature>
<feature type="transmembrane region" description="Helical" evidence="2">
    <location>
        <begin position="325"/>
        <end position="345"/>
    </location>
</feature>
<feature type="topological domain" description="Periplasmic" evidence="1">
    <location>
        <begin position="346"/>
        <end position="354"/>
    </location>
</feature>
<feature type="transmembrane region" description="Helical" evidence="2">
    <location>
        <begin position="355"/>
        <end position="375"/>
    </location>
</feature>
<feature type="topological domain" description="Cytoplasmic" evidence="1">
    <location>
        <begin position="376"/>
        <end position="400"/>
    </location>
</feature>
<protein>
    <recommendedName>
        <fullName evidence="2">Probable peptidoglycan glycosyltransferase FtsW</fullName>
        <shortName evidence="2">PGT</shortName>
        <ecNumber evidence="2">2.4.99.28</ecNumber>
    </recommendedName>
    <alternativeName>
        <fullName evidence="2">Cell division protein FtsW</fullName>
    </alternativeName>
    <alternativeName>
        <fullName evidence="2">Cell wall polymerase</fullName>
    </alternativeName>
    <alternativeName>
        <fullName evidence="2">Peptidoglycan polymerase</fullName>
        <shortName evidence="2">PG polymerase</shortName>
    </alternativeName>
</protein>
<comment type="function">
    <text evidence="2">Peptidoglycan polymerase that is essential for cell division.</text>
</comment>
<comment type="catalytic activity">
    <reaction evidence="2">
        <text>[GlcNAc-(1-&gt;4)-Mur2Ac(oyl-L-Ala-gamma-D-Glu-L-Lys-D-Ala-D-Ala)](n)-di-trans,octa-cis-undecaprenyl diphosphate + beta-D-GlcNAc-(1-&gt;4)-Mur2Ac(oyl-L-Ala-gamma-D-Glu-L-Lys-D-Ala-D-Ala)-di-trans,octa-cis-undecaprenyl diphosphate = [GlcNAc-(1-&gt;4)-Mur2Ac(oyl-L-Ala-gamma-D-Glu-L-Lys-D-Ala-D-Ala)](n+1)-di-trans,octa-cis-undecaprenyl diphosphate + di-trans,octa-cis-undecaprenyl diphosphate + H(+)</text>
        <dbReference type="Rhea" id="RHEA:23708"/>
        <dbReference type="Rhea" id="RHEA-COMP:9602"/>
        <dbReference type="Rhea" id="RHEA-COMP:9603"/>
        <dbReference type="ChEBI" id="CHEBI:15378"/>
        <dbReference type="ChEBI" id="CHEBI:58405"/>
        <dbReference type="ChEBI" id="CHEBI:60033"/>
        <dbReference type="ChEBI" id="CHEBI:78435"/>
        <dbReference type="EC" id="2.4.99.28"/>
    </reaction>
</comment>
<comment type="pathway">
    <text evidence="2">Cell wall biogenesis; peptidoglycan biosynthesis.</text>
</comment>
<comment type="subcellular location">
    <subcellularLocation>
        <location evidence="2">Cell inner membrane</location>
        <topology evidence="2">Multi-pass membrane protein</topology>
    </subcellularLocation>
    <text evidence="2">Localizes to the division septum.</text>
</comment>
<comment type="similarity">
    <text evidence="2">Belongs to the SEDS family. FtsW subfamily.</text>
</comment>
<dbReference type="EC" id="2.4.99.28" evidence="2"/>
<dbReference type="EMBL" id="CP001905">
    <property type="protein sequence ID" value="ADC72692.1"/>
    <property type="molecule type" value="Genomic_DNA"/>
</dbReference>
<dbReference type="RefSeq" id="WP_012983564.1">
    <property type="nucleotide sequence ID" value="NC_013889.1"/>
</dbReference>
<dbReference type="SMR" id="D3SD93"/>
<dbReference type="STRING" id="396595.TK90_2202"/>
<dbReference type="KEGG" id="tkm:TK90_2202"/>
<dbReference type="eggNOG" id="COG0772">
    <property type="taxonomic scope" value="Bacteria"/>
</dbReference>
<dbReference type="HOGENOM" id="CLU_029243_0_1_6"/>
<dbReference type="OrthoDB" id="9768187at2"/>
<dbReference type="UniPathway" id="UPA00219"/>
<dbReference type="Proteomes" id="UP000009099">
    <property type="component" value="Chromosome"/>
</dbReference>
<dbReference type="GO" id="GO:0032153">
    <property type="term" value="C:cell division site"/>
    <property type="evidence" value="ECO:0007669"/>
    <property type="project" value="UniProtKB-UniRule"/>
</dbReference>
<dbReference type="GO" id="GO:0005886">
    <property type="term" value="C:plasma membrane"/>
    <property type="evidence" value="ECO:0007669"/>
    <property type="project" value="UniProtKB-SubCell"/>
</dbReference>
<dbReference type="GO" id="GO:0015648">
    <property type="term" value="F:lipid-linked peptidoglycan transporter activity"/>
    <property type="evidence" value="ECO:0007669"/>
    <property type="project" value="TreeGrafter"/>
</dbReference>
<dbReference type="GO" id="GO:0008955">
    <property type="term" value="F:peptidoglycan glycosyltransferase activity"/>
    <property type="evidence" value="ECO:0007669"/>
    <property type="project" value="UniProtKB-UniRule"/>
</dbReference>
<dbReference type="GO" id="GO:0071555">
    <property type="term" value="P:cell wall organization"/>
    <property type="evidence" value="ECO:0007669"/>
    <property type="project" value="UniProtKB-KW"/>
</dbReference>
<dbReference type="GO" id="GO:0043093">
    <property type="term" value="P:FtsZ-dependent cytokinesis"/>
    <property type="evidence" value="ECO:0007669"/>
    <property type="project" value="UniProtKB-UniRule"/>
</dbReference>
<dbReference type="GO" id="GO:0009252">
    <property type="term" value="P:peptidoglycan biosynthetic process"/>
    <property type="evidence" value="ECO:0007669"/>
    <property type="project" value="UniProtKB-UniRule"/>
</dbReference>
<dbReference type="GO" id="GO:0008360">
    <property type="term" value="P:regulation of cell shape"/>
    <property type="evidence" value="ECO:0007669"/>
    <property type="project" value="UniProtKB-KW"/>
</dbReference>
<dbReference type="HAMAP" id="MF_00913">
    <property type="entry name" value="PGT_FtsW_proteobact"/>
    <property type="match status" value="1"/>
</dbReference>
<dbReference type="InterPro" id="IPR018365">
    <property type="entry name" value="Cell_cycle_FtsW-rel_CS"/>
</dbReference>
<dbReference type="InterPro" id="IPR013437">
    <property type="entry name" value="FtsW"/>
</dbReference>
<dbReference type="InterPro" id="IPR001182">
    <property type="entry name" value="FtsW/RodA"/>
</dbReference>
<dbReference type="NCBIfam" id="TIGR02614">
    <property type="entry name" value="ftsW"/>
    <property type="match status" value="1"/>
</dbReference>
<dbReference type="PANTHER" id="PTHR30474">
    <property type="entry name" value="CELL CYCLE PROTEIN"/>
    <property type="match status" value="1"/>
</dbReference>
<dbReference type="PANTHER" id="PTHR30474:SF2">
    <property type="entry name" value="PEPTIDOGLYCAN GLYCOSYLTRANSFERASE FTSW-RELATED"/>
    <property type="match status" value="1"/>
</dbReference>
<dbReference type="Pfam" id="PF01098">
    <property type="entry name" value="FTSW_RODA_SPOVE"/>
    <property type="match status" value="1"/>
</dbReference>
<dbReference type="PROSITE" id="PS00428">
    <property type="entry name" value="FTSW_RODA_SPOVE"/>
    <property type="match status" value="1"/>
</dbReference>
<gene>
    <name evidence="2" type="primary">ftsW</name>
    <name type="ordered locus">TK90_2202</name>
</gene>
<name>FTSW_THISK</name>